<reference key="1">
    <citation type="journal article" date="2006" name="Biochem. J.">
        <title>Molecular cloning of disintegrins from Cerastes vipera and Macrovipera lebetina transmediterranea venom gland cDNA libraries: insight into the evolution of the snake venom integrin-inhibition system.</title>
        <authorList>
            <person name="Sanz L."/>
            <person name="Bazaa A."/>
            <person name="Marrakchi N."/>
            <person name="Perez A."/>
            <person name="Chenik M."/>
            <person name="Bel Lasfer Z."/>
            <person name="El Ayeb M."/>
            <person name="Calvete J.J."/>
        </authorList>
    </citation>
    <scope>NUCLEOTIDE SEQUENCE [MRNA]</scope>
    <source>
        <tissue>Venom gland</tissue>
    </source>
</reference>
<organism>
    <name type="scientific">Cerastes vipera</name>
    <name type="common">Sahara sand viper</name>
    <dbReference type="NCBI Taxonomy" id="8698"/>
    <lineage>
        <taxon>Eukaryota</taxon>
        <taxon>Metazoa</taxon>
        <taxon>Chordata</taxon>
        <taxon>Craniata</taxon>
        <taxon>Vertebrata</taxon>
        <taxon>Euteleostomi</taxon>
        <taxon>Lepidosauria</taxon>
        <taxon>Squamata</taxon>
        <taxon>Bifurcata</taxon>
        <taxon>Unidentata</taxon>
        <taxon>Episquamata</taxon>
        <taxon>Toxicofera</taxon>
        <taxon>Serpentes</taxon>
        <taxon>Colubroidea</taxon>
        <taxon>Viperidae</taxon>
        <taxon>Viperinae</taxon>
        <taxon>Cerastes</taxon>
    </lineage>
</organism>
<comment type="function">
    <text evidence="1">Inhibits ADP-induced human platelet aggregation. Antagonist of alpha-IIb/beta-3 (ITGA2B/ITGB3) (By similarity).</text>
</comment>
<comment type="subunit">
    <text evidence="1">Heterodimer with subunit alpha; disulfide-linked.</text>
</comment>
<comment type="subcellular location">
    <subcellularLocation>
        <location evidence="1">Secreted</location>
    </subcellularLocation>
</comment>
<comment type="tissue specificity">
    <text>Expressed by the venom gland.</text>
</comment>
<comment type="similarity">
    <text evidence="3">Belongs to the disintegrin family. Dimeric disintegrin subfamily.</text>
</comment>
<dbReference type="EMBL" id="AM114014">
    <property type="protein sequence ID" value="CAJ34938.1"/>
    <property type="molecule type" value="mRNA"/>
</dbReference>
<dbReference type="SMR" id="Q3BK15"/>
<dbReference type="GO" id="GO:0005576">
    <property type="term" value="C:extracellular region"/>
    <property type="evidence" value="ECO:0007669"/>
    <property type="project" value="UniProtKB-SubCell"/>
</dbReference>
<dbReference type="GO" id="GO:0090729">
    <property type="term" value="F:toxin activity"/>
    <property type="evidence" value="ECO:0007669"/>
    <property type="project" value="UniProtKB-KW"/>
</dbReference>
<dbReference type="Gene3D" id="4.10.70.10">
    <property type="entry name" value="Disintegrin domain"/>
    <property type="match status" value="1"/>
</dbReference>
<dbReference type="InterPro" id="IPR018358">
    <property type="entry name" value="Disintegrin_CS"/>
</dbReference>
<dbReference type="InterPro" id="IPR001762">
    <property type="entry name" value="Disintegrin_dom"/>
</dbReference>
<dbReference type="InterPro" id="IPR036436">
    <property type="entry name" value="Disintegrin_dom_sf"/>
</dbReference>
<dbReference type="PANTHER" id="PTHR11905">
    <property type="entry name" value="ADAM A DISINTEGRIN AND METALLOPROTEASE DOMAIN"/>
    <property type="match status" value="1"/>
</dbReference>
<dbReference type="PANTHER" id="PTHR11905:SF159">
    <property type="entry name" value="ADAM METALLOPROTEASE"/>
    <property type="match status" value="1"/>
</dbReference>
<dbReference type="Pfam" id="PF00200">
    <property type="entry name" value="Disintegrin"/>
    <property type="match status" value="1"/>
</dbReference>
<dbReference type="PRINTS" id="PR00289">
    <property type="entry name" value="DISINTEGRIN"/>
</dbReference>
<dbReference type="SMART" id="SM00050">
    <property type="entry name" value="DISIN"/>
    <property type="match status" value="1"/>
</dbReference>
<dbReference type="SUPFAM" id="SSF57552">
    <property type="entry name" value="Blood coagulation inhibitor (disintegrin)"/>
    <property type="match status" value="1"/>
</dbReference>
<dbReference type="PROSITE" id="PS00427">
    <property type="entry name" value="DISINTEGRIN_1"/>
    <property type="match status" value="1"/>
</dbReference>
<dbReference type="PROSITE" id="PS50214">
    <property type="entry name" value="DISINTEGRIN_2"/>
    <property type="match status" value="1"/>
</dbReference>
<feature type="chain" id="PRO_5000076855" description="Disintegrin CV-11-beta">
    <location>
        <begin position="1" status="less than"/>
        <end position="64"/>
    </location>
</feature>
<feature type="domain" description="Disintegrin" evidence="2">
    <location>
        <begin position="1" status="less than"/>
        <end position="64"/>
    </location>
</feature>
<feature type="short sequence motif" description="Cell attachment site">
    <location>
        <begin position="42"/>
        <end position="44"/>
    </location>
</feature>
<feature type="disulfide bond" evidence="2">
    <location>
        <begin position="6"/>
        <end position="29"/>
    </location>
</feature>
<feature type="disulfide bond" description="Interchain (with C-54 in alpha subunit)" evidence="2">
    <location>
        <position position="7"/>
    </location>
</feature>
<feature type="disulfide bond" description="Interchain (with C-59 in alpha subunit)" evidence="2">
    <location>
        <position position="12"/>
    </location>
</feature>
<feature type="disulfide bond" evidence="2">
    <location>
        <begin position="20"/>
        <end position="26"/>
    </location>
</feature>
<feature type="disulfide bond" evidence="2">
    <location>
        <begin position="25"/>
        <end position="50"/>
    </location>
</feature>
<feature type="disulfide bond" evidence="2">
    <location>
        <begin position="38"/>
        <end position="57"/>
    </location>
</feature>
<feature type="non-terminal residue">
    <location>
        <position position="1"/>
    </location>
</feature>
<protein>
    <recommendedName>
        <fullName>Disintegrin CV-11-beta</fullName>
        <shortName>CV11-beta</shortName>
    </recommendedName>
</protein>
<evidence type="ECO:0000250" key="1"/>
<evidence type="ECO:0000255" key="2">
    <source>
        <dbReference type="PROSITE-ProRule" id="PRU00068"/>
    </source>
</evidence>
<evidence type="ECO:0000305" key="3"/>
<name>DIDB_CERVI</name>
<sequence length="64" mass="7019">NSAHPCCDPVTCKPKRGEHCISGPCCRNCKFLSPGTICKKARGDDMNDYCTGISSDCPRNPWKD</sequence>
<accession>Q3BK15</accession>
<keyword id="KW-1217">Cell adhesion impairing toxin</keyword>
<keyword id="KW-1015">Disulfide bond</keyword>
<keyword id="KW-1199">Hemostasis impairing toxin</keyword>
<keyword id="KW-1201">Platelet aggregation inhibiting toxin</keyword>
<keyword id="KW-0964">Secreted</keyword>
<keyword id="KW-0800">Toxin</keyword>
<proteinExistence type="evidence at transcript level"/>